<feature type="chain" id="PRO_1000086230" description="Small ribosomal subunit protein uS13">
    <location>
        <begin position="1"/>
        <end position="122"/>
    </location>
</feature>
<feature type="region of interest" description="Disordered" evidence="2">
    <location>
        <begin position="97"/>
        <end position="122"/>
    </location>
</feature>
<organism>
    <name type="scientific">Brucella suis (strain ATCC 23445 / NCTC 10510)</name>
    <dbReference type="NCBI Taxonomy" id="470137"/>
    <lineage>
        <taxon>Bacteria</taxon>
        <taxon>Pseudomonadati</taxon>
        <taxon>Pseudomonadota</taxon>
        <taxon>Alphaproteobacteria</taxon>
        <taxon>Hyphomicrobiales</taxon>
        <taxon>Brucellaceae</taxon>
        <taxon>Brucella/Ochrobactrum group</taxon>
        <taxon>Brucella</taxon>
    </lineage>
</organism>
<gene>
    <name evidence="1" type="primary">rpsM</name>
    <name type="ordered locus">BSUIS_A1259</name>
</gene>
<dbReference type="EMBL" id="CP000911">
    <property type="protein sequence ID" value="ABY38310.1"/>
    <property type="molecule type" value="Genomic_DNA"/>
</dbReference>
<dbReference type="RefSeq" id="WP_002964340.1">
    <property type="nucleotide sequence ID" value="NC_010169.1"/>
</dbReference>
<dbReference type="SMR" id="B0CH09"/>
<dbReference type="GeneID" id="97533546"/>
<dbReference type="KEGG" id="bmt:BSUIS_A1259"/>
<dbReference type="HOGENOM" id="CLU_103849_1_2_5"/>
<dbReference type="Proteomes" id="UP000008545">
    <property type="component" value="Chromosome I"/>
</dbReference>
<dbReference type="GO" id="GO:0005829">
    <property type="term" value="C:cytosol"/>
    <property type="evidence" value="ECO:0007669"/>
    <property type="project" value="TreeGrafter"/>
</dbReference>
<dbReference type="GO" id="GO:0015935">
    <property type="term" value="C:small ribosomal subunit"/>
    <property type="evidence" value="ECO:0007669"/>
    <property type="project" value="TreeGrafter"/>
</dbReference>
<dbReference type="GO" id="GO:0019843">
    <property type="term" value="F:rRNA binding"/>
    <property type="evidence" value="ECO:0007669"/>
    <property type="project" value="UniProtKB-UniRule"/>
</dbReference>
<dbReference type="GO" id="GO:0003735">
    <property type="term" value="F:structural constituent of ribosome"/>
    <property type="evidence" value="ECO:0007669"/>
    <property type="project" value="InterPro"/>
</dbReference>
<dbReference type="GO" id="GO:0000049">
    <property type="term" value="F:tRNA binding"/>
    <property type="evidence" value="ECO:0007669"/>
    <property type="project" value="UniProtKB-UniRule"/>
</dbReference>
<dbReference type="GO" id="GO:0006412">
    <property type="term" value="P:translation"/>
    <property type="evidence" value="ECO:0007669"/>
    <property type="project" value="UniProtKB-UniRule"/>
</dbReference>
<dbReference type="FunFam" id="1.10.8.50:FF:000001">
    <property type="entry name" value="30S ribosomal protein S13"/>
    <property type="match status" value="1"/>
</dbReference>
<dbReference type="FunFam" id="4.10.910.10:FF:000001">
    <property type="entry name" value="30S ribosomal protein S13"/>
    <property type="match status" value="1"/>
</dbReference>
<dbReference type="Gene3D" id="1.10.8.50">
    <property type="match status" value="1"/>
</dbReference>
<dbReference type="Gene3D" id="4.10.910.10">
    <property type="entry name" value="30s ribosomal protein s13, domain 2"/>
    <property type="match status" value="1"/>
</dbReference>
<dbReference type="HAMAP" id="MF_01315">
    <property type="entry name" value="Ribosomal_uS13"/>
    <property type="match status" value="1"/>
</dbReference>
<dbReference type="InterPro" id="IPR027437">
    <property type="entry name" value="Rbsml_uS13_C"/>
</dbReference>
<dbReference type="InterPro" id="IPR001892">
    <property type="entry name" value="Ribosomal_uS13"/>
</dbReference>
<dbReference type="InterPro" id="IPR010979">
    <property type="entry name" value="Ribosomal_uS13-like_H2TH"/>
</dbReference>
<dbReference type="InterPro" id="IPR019980">
    <property type="entry name" value="Ribosomal_uS13_bac-type"/>
</dbReference>
<dbReference type="InterPro" id="IPR018269">
    <property type="entry name" value="Ribosomal_uS13_CS"/>
</dbReference>
<dbReference type="NCBIfam" id="TIGR03631">
    <property type="entry name" value="uS13_bact"/>
    <property type="match status" value="1"/>
</dbReference>
<dbReference type="PANTHER" id="PTHR10871">
    <property type="entry name" value="30S RIBOSOMAL PROTEIN S13/40S RIBOSOMAL PROTEIN S18"/>
    <property type="match status" value="1"/>
</dbReference>
<dbReference type="PANTHER" id="PTHR10871:SF1">
    <property type="entry name" value="SMALL RIBOSOMAL SUBUNIT PROTEIN US13M"/>
    <property type="match status" value="1"/>
</dbReference>
<dbReference type="Pfam" id="PF00416">
    <property type="entry name" value="Ribosomal_S13"/>
    <property type="match status" value="1"/>
</dbReference>
<dbReference type="PIRSF" id="PIRSF002134">
    <property type="entry name" value="Ribosomal_S13"/>
    <property type="match status" value="1"/>
</dbReference>
<dbReference type="SUPFAM" id="SSF46946">
    <property type="entry name" value="S13-like H2TH domain"/>
    <property type="match status" value="1"/>
</dbReference>
<dbReference type="PROSITE" id="PS00646">
    <property type="entry name" value="RIBOSOMAL_S13_1"/>
    <property type="match status" value="1"/>
</dbReference>
<dbReference type="PROSITE" id="PS50159">
    <property type="entry name" value="RIBOSOMAL_S13_2"/>
    <property type="match status" value="1"/>
</dbReference>
<reference key="1">
    <citation type="submission" date="2007-12" db="EMBL/GenBank/DDBJ databases">
        <title>Brucella suis ATCC 23445 whole genome shotgun sequencing project.</title>
        <authorList>
            <person name="Setubal J.C."/>
            <person name="Bowns C."/>
            <person name="Boyle S."/>
            <person name="Crasta O.R."/>
            <person name="Czar M.J."/>
            <person name="Dharmanolla C."/>
            <person name="Gillespie J.J."/>
            <person name="Kenyon R.W."/>
            <person name="Lu J."/>
            <person name="Mane S."/>
            <person name="Mohapatra S."/>
            <person name="Nagrani S."/>
            <person name="Purkayastha A."/>
            <person name="Rajasimha H.K."/>
            <person name="Shallom J.M."/>
            <person name="Shallom S."/>
            <person name="Shukla M."/>
            <person name="Snyder E.E."/>
            <person name="Sobral B.W."/>
            <person name="Wattam A.R."/>
            <person name="Will R."/>
            <person name="Williams K."/>
            <person name="Yoo H."/>
            <person name="Bruce D."/>
            <person name="Detter C."/>
            <person name="Munk C."/>
            <person name="Brettin T.S."/>
        </authorList>
    </citation>
    <scope>NUCLEOTIDE SEQUENCE [LARGE SCALE GENOMIC DNA]</scope>
    <source>
        <strain>ATCC 23445 / NCTC 10510</strain>
    </source>
</reference>
<evidence type="ECO:0000255" key="1">
    <source>
        <dbReference type="HAMAP-Rule" id="MF_01315"/>
    </source>
</evidence>
<evidence type="ECO:0000256" key="2">
    <source>
        <dbReference type="SAM" id="MobiDB-lite"/>
    </source>
</evidence>
<evidence type="ECO:0000305" key="3"/>
<comment type="function">
    <text evidence="1">Located at the top of the head of the 30S subunit, it contacts several helices of the 16S rRNA. In the 70S ribosome it contacts the 23S rRNA (bridge B1a) and protein L5 of the 50S subunit (bridge B1b), connecting the 2 subunits; these bridges are implicated in subunit movement. Contacts the tRNAs in the A and P-sites.</text>
</comment>
<comment type="subunit">
    <text evidence="1">Part of the 30S ribosomal subunit. Forms a loose heterodimer with protein S19. Forms two bridges to the 50S subunit in the 70S ribosome.</text>
</comment>
<comment type="similarity">
    <text evidence="1">Belongs to the universal ribosomal protein uS13 family.</text>
</comment>
<accession>B0CH09</accession>
<name>RS13_BRUSI</name>
<proteinExistence type="inferred from homology"/>
<sequence>MARIAGVNIPTNKRVNIALQYIHGIGPKFAREIVTKVGIADDRRVNQLSDAEVLQIREAIDADYQVEGDLRREVSMNIKRLMDLGCYRGLRHRRSLPVRGQRTHTNARTRKGPAKAIAGKKK</sequence>
<keyword id="KW-0687">Ribonucleoprotein</keyword>
<keyword id="KW-0689">Ribosomal protein</keyword>
<keyword id="KW-0694">RNA-binding</keyword>
<keyword id="KW-0699">rRNA-binding</keyword>
<keyword id="KW-0820">tRNA-binding</keyword>
<protein>
    <recommendedName>
        <fullName evidence="1">Small ribosomal subunit protein uS13</fullName>
    </recommendedName>
    <alternativeName>
        <fullName evidence="3">30S ribosomal protein S13</fullName>
    </alternativeName>
</protein>